<evidence type="ECO:0000255" key="1">
    <source>
        <dbReference type="HAMAP-Rule" id="MF_00537"/>
    </source>
</evidence>
<evidence type="ECO:0000305" key="2"/>
<protein>
    <recommendedName>
        <fullName evidence="1">Small ribosomal subunit protein uS14</fullName>
    </recommendedName>
    <alternativeName>
        <fullName evidence="2">30S ribosomal protein S14</fullName>
    </alternativeName>
</protein>
<reference key="1">
    <citation type="journal article" date="2007" name="Nat. Biotechnol.">
        <title>Genome sequence and identification of candidate vaccine antigens from the animal pathogen Dichelobacter nodosus.</title>
        <authorList>
            <person name="Myers G.S.A."/>
            <person name="Parker D."/>
            <person name="Al-Hasani K."/>
            <person name="Kennan R.M."/>
            <person name="Seemann T."/>
            <person name="Ren Q."/>
            <person name="Badger J.H."/>
            <person name="Selengut J.D."/>
            <person name="Deboy R.T."/>
            <person name="Tettelin H."/>
            <person name="Boyce J.D."/>
            <person name="McCarl V.P."/>
            <person name="Han X."/>
            <person name="Nelson W.C."/>
            <person name="Madupu R."/>
            <person name="Mohamoud Y."/>
            <person name="Holley T."/>
            <person name="Fedorova N."/>
            <person name="Khouri H."/>
            <person name="Bottomley S.P."/>
            <person name="Whittington R.J."/>
            <person name="Adler B."/>
            <person name="Songer J.G."/>
            <person name="Rood J.I."/>
            <person name="Paulsen I.T."/>
        </authorList>
    </citation>
    <scope>NUCLEOTIDE SEQUENCE [LARGE SCALE GENOMIC DNA]</scope>
    <source>
        <strain>VCS1703A</strain>
    </source>
</reference>
<sequence length="102" mass="11964">MAKKCMVNREIKRIKTVKKFAAKREELKEIIRKVATYSDEERAAAQEKLQKLPRNASPSRVQRRCRITGRPHAVYRKFGLSRIKLRELTMRGEVPGVRKASW</sequence>
<accession>A5EX86</accession>
<dbReference type="EMBL" id="CP000513">
    <property type="protein sequence ID" value="ABQ14111.1"/>
    <property type="molecule type" value="Genomic_DNA"/>
</dbReference>
<dbReference type="RefSeq" id="WP_012031557.1">
    <property type="nucleotide sequence ID" value="NC_009446.1"/>
</dbReference>
<dbReference type="SMR" id="A5EX86"/>
<dbReference type="STRING" id="246195.DNO_1262"/>
<dbReference type="KEGG" id="dno:DNO_1262"/>
<dbReference type="eggNOG" id="COG0199">
    <property type="taxonomic scope" value="Bacteria"/>
</dbReference>
<dbReference type="HOGENOM" id="CLU_139869_0_1_6"/>
<dbReference type="OrthoDB" id="9810484at2"/>
<dbReference type="Proteomes" id="UP000000248">
    <property type="component" value="Chromosome"/>
</dbReference>
<dbReference type="GO" id="GO:0005737">
    <property type="term" value="C:cytoplasm"/>
    <property type="evidence" value="ECO:0007669"/>
    <property type="project" value="UniProtKB-ARBA"/>
</dbReference>
<dbReference type="GO" id="GO:0015935">
    <property type="term" value="C:small ribosomal subunit"/>
    <property type="evidence" value="ECO:0007669"/>
    <property type="project" value="TreeGrafter"/>
</dbReference>
<dbReference type="GO" id="GO:0019843">
    <property type="term" value="F:rRNA binding"/>
    <property type="evidence" value="ECO:0007669"/>
    <property type="project" value="UniProtKB-UniRule"/>
</dbReference>
<dbReference type="GO" id="GO:0003735">
    <property type="term" value="F:structural constituent of ribosome"/>
    <property type="evidence" value="ECO:0007669"/>
    <property type="project" value="InterPro"/>
</dbReference>
<dbReference type="GO" id="GO:0006412">
    <property type="term" value="P:translation"/>
    <property type="evidence" value="ECO:0007669"/>
    <property type="project" value="UniProtKB-UniRule"/>
</dbReference>
<dbReference type="FunFam" id="1.10.287.1480:FF:000001">
    <property type="entry name" value="30S ribosomal protein S14"/>
    <property type="match status" value="1"/>
</dbReference>
<dbReference type="Gene3D" id="1.10.287.1480">
    <property type="match status" value="1"/>
</dbReference>
<dbReference type="HAMAP" id="MF_00537">
    <property type="entry name" value="Ribosomal_uS14_1"/>
    <property type="match status" value="1"/>
</dbReference>
<dbReference type="InterPro" id="IPR001209">
    <property type="entry name" value="Ribosomal_uS14"/>
</dbReference>
<dbReference type="InterPro" id="IPR023036">
    <property type="entry name" value="Ribosomal_uS14_bac/plastid"/>
</dbReference>
<dbReference type="InterPro" id="IPR018271">
    <property type="entry name" value="Ribosomal_uS14_CS"/>
</dbReference>
<dbReference type="NCBIfam" id="NF006477">
    <property type="entry name" value="PRK08881.1"/>
    <property type="match status" value="1"/>
</dbReference>
<dbReference type="PANTHER" id="PTHR19836">
    <property type="entry name" value="30S RIBOSOMAL PROTEIN S14"/>
    <property type="match status" value="1"/>
</dbReference>
<dbReference type="PANTHER" id="PTHR19836:SF19">
    <property type="entry name" value="SMALL RIBOSOMAL SUBUNIT PROTEIN US14M"/>
    <property type="match status" value="1"/>
</dbReference>
<dbReference type="Pfam" id="PF00253">
    <property type="entry name" value="Ribosomal_S14"/>
    <property type="match status" value="1"/>
</dbReference>
<dbReference type="SUPFAM" id="SSF57716">
    <property type="entry name" value="Glucocorticoid receptor-like (DNA-binding domain)"/>
    <property type="match status" value="1"/>
</dbReference>
<dbReference type="PROSITE" id="PS00527">
    <property type="entry name" value="RIBOSOMAL_S14"/>
    <property type="match status" value="1"/>
</dbReference>
<comment type="function">
    <text evidence="1">Binds 16S rRNA, required for the assembly of 30S particles and may also be responsible for determining the conformation of the 16S rRNA at the A site.</text>
</comment>
<comment type="subunit">
    <text evidence="1">Part of the 30S ribosomal subunit. Contacts proteins S3 and S10.</text>
</comment>
<comment type="similarity">
    <text evidence="1">Belongs to the universal ribosomal protein uS14 family.</text>
</comment>
<proteinExistence type="inferred from homology"/>
<feature type="chain" id="PRO_1000128379" description="Small ribosomal subunit protein uS14">
    <location>
        <begin position="1"/>
        <end position="102"/>
    </location>
</feature>
<keyword id="KW-1185">Reference proteome</keyword>
<keyword id="KW-0687">Ribonucleoprotein</keyword>
<keyword id="KW-0689">Ribosomal protein</keyword>
<keyword id="KW-0694">RNA-binding</keyword>
<keyword id="KW-0699">rRNA-binding</keyword>
<organism>
    <name type="scientific">Dichelobacter nodosus (strain VCS1703A)</name>
    <dbReference type="NCBI Taxonomy" id="246195"/>
    <lineage>
        <taxon>Bacteria</taxon>
        <taxon>Pseudomonadati</taxon>
        <taxon>Pseudomonadota</taxon>
        <taxon>Gammaproteobacteria</taxon>
        <taxon>Cardiobacteriales</taxon>
        <taxon>Cardiobacteriaceae</taxon>
        <taxon>Dichelobacter</taxon>
    </lineage>
</organism>
<name>RS14_DICNV</name>
<gene>
    <name evidence="1" type="primary">rpsN</name>
    <name type="ordered locus">DNO_1262</name>
</gene>